<comment type="function">
    <text evidence="1">Catalyzes the exchange of L-carnitine for gamma-butyrobetaine.</text>
</comment>
<comment type="catalytic activity">
    <reaction evidence="1">
        <text>4-(trimethylamino)butanoate(in) + (R)-carnitine(out) = 4-(trimethylamino)butanoate(out) + (R)-carnitine(in)</text>
        <dbReference type="Rhea" id="RHEA:29427"/>
        <dbReference type="ChEBI" id="CHEBI:16244"/>
        <dbReference type="ChEBI" id="CHEBI:16347"/>
    </reaction>
</comment>
<comment type="pathway">
    <text evidence="1">Amine and polyamine metabolism; carnitine metabolism.</text>
</comment>
<comment type="subunit">
    <text evidence="1">Homotrimer.</text>
</comment>
<comment type="subcellular location">
    <subcellularLocation>
        <location evidence="1">Cell inner membrane</location>
        <topology evidence="1">Multi-pass membrane protein</topology>
    </subcellularLocation>
</comment>
<comment type="similarity">
    <text evidence="1">Belongs to the BCCT transporter (TC 2.A.15) family. CaiT subfamily.</text>
</comment>
<protein>
    <recommendedName>
        <fullName evidence="1">L-carnitine/gamma-butyrobetaine antiporter</fullName>
    </recommendedName>
</protein>
<evidence type="ECO:0000255" key="1">
    <source>
        <dbReference type="HAMAP-Rule" id="MF_01049"/>
    </source>
</evidence>
<proteinExistence type="inferred from homology"/>
<dbReference type="EMBL" id="CP000886">
    <property type="protein sequence ID" value="ABX65534.1"/>
    <property type="molecule type" value="Genomic_DNA"/>
</dbReference>
<dbReference type="RefSeq" id="WP_000787073.1">
    <property type="nucleotide sequence ID" value="NC_010102.1"/>
</dbReference>
<dbReference type="SMR" id="A9MYK0"/>
<dbReference type="KEGG" id="spq:SPAB_00091"/>
<dbReference type="PATRIC" id="fig|1016998.12.peg.87"/>
<dbReference type="HOGENOM" id="CLU_010118_6_0_6"/>
<dbReference type="BioCyc" id="SENT1016998:SPAB_RS00365-MONOMER"/>
<dbReference type="UniPathway" id="UPA00117"/>
<dbReference type="Proteomes" id="UP000008556">
    <property type="component" value="Chromosome"/>
</dbReference>
<dbReference type="GO" id="GO:0005886">
    <property type="term" value="C:plasma membrane"/>
    <property type="evidence" value="ECO:0007669"/>
    <property type="project" value="UniProtKB-SubCell"/>
</dbReference>
<dbReference type="GO" id="GO:0044667">
    <property type="term" value="F:(R)-carnitine:4-(trimethylammonio)butanoate antiporter activity"/>
    <property type="evidence" value="ECO:0007669"/>
    <property type="project" value="UniProtKB-UniRule"/>
</dbReference>
<dbReference type="GO" id="GO:1900751">
    <property type="term" value="P:4-(trimethylammonio)butanoate transport"/>
    <property type="evidence" value="ECO:0007669"/>
    <property type="project" value="InterPro"/>
</dbReference>
<dbReference type="GO" id="GO:0009437">
    <property type="term" value="P:carnitine metabolic process"/>
    <property type="evidence" value="ECO:0007669"/>
    <property type="project" value="UniProtKB-UniRule"/>
</dbReference>
<dbReference type="HAMAP" id="MF_01049">
    <property type="entry name" value="CaiT"/>
    <property type="match status" value="1"/>
</dbReference>
<dbReference type="InterPro" id="IPR018093">
    <property type="entry name" value="BCCT_CS"/>
</dbReference>
<dbReference type="InterPro" id="IPR000060">
    <property type="entry name" value="BCCT_transptr"/>
</dbReference>
<dbReference type="InterPro" id="IPR023449">
    <property type="entry name" value="BCCT_transptr_CaiT"/>
</dbReference>
<dbReference type="NCBIfam" id="TIGR00842">
    <property type="entry name" value="bcct"/>
    <property type="match status" value="1"/>
</dbReference>
<dbReference type="NCBIfam" id="NF002887">
    <property type="entry name" value="PRK03356.1"/>
    <property type="match status" value="1"/>
</dbReference>
<dbReference type="PANTHER" id="PTHR30047">
    <property type="entry name" value="HIGH-AFFINITY CHOLINE TRANSPORT PROTEIN-RELATED"/>
    <property type="match status" value="1"/>
</dbReference>
<dbReference type="PANTHER" id="PTHR30047:SF11">
    <property type="entry name" value="L-CARNITINE_GAMMA-BUTYROBETAINE ANTIPORTER"/>
    <property type="match status" value="1"/>
</dbReference>
<dbReference type="Pfam" id="PF02028">
    <property type="entry name" value="BCCT"/>
    <property type="match status" value="1"/>
</dbReference>
<dbReference type="PROSITE" id="PS01303">
    <property type="entry name" value="BCCT"/>
    <property type="match status" value="1"/>
</dbReference>
<gene>
    <name evidence="1" type="primary">caiT</name>
    <name type="ordered locus">SPAB_00091</name>
</gene>
<sequence length="505" mass="56643">MKNEKKKSGIEPKVFFPPLIIVGILCWLTVRDLDAANVVINAVFSYVTNVWGWAFEWYMVVMLFGWFWLVFGPYAKKRLGDEKPEFSTASWIFMMFASCTSAAVLFWGSIEIYYYISTPPFGLEPNSTGAKEIGLAYSLFHWGPLPWATYSFLSVAFAYFFFVRKMDVIRPSSTLVPLVGEKHAKGLFGTIVDNFYLVALIFAMGTSLGLATPLVTECMQWLFGIPHTLQLDAIIITCWIILNAICVACGLQKGVRIASDVRSYLSFLMLGWVFIVSGASFIMNYFTDSVGMLLMHLPRMLFYTDAIGKGGFPQGWTVFYWAWWVIYAIQMSIFLARISRGRTVRELCFGMVMGLTASTWILWTVLGSNTLLLMDKNILNIPQLIEQHGVARAIIETWAALPLSTATMWGFFILCFIATVTLINACSYTLAMSTCREVRDGEEPPLLVRIGWSVLVGIIGIVLLALGGLKPIQTAIIAGGCPLFFVNIMVTLSFIKDAKVHWKDK</sequence>
<keyword id="KW-0050">Antiport</keyword>
<keyword id="KW-0997">Cell inner membrane</keyword>
<keyword id="KW-1003">Cell membrane</keyword>
<keyword id="KW-0472">Membrane</keyword>
<keyword id="KW-0812">Transmembrane</keyword>
<keyword id="KW-1133">Transmembrane helix</keyword>
<keyword id="KW-0813">Transport</keyword>
<reference key="1">
    <citation type="submission" date="2007-11" db="EMBL/GenBank/DDBJ databases">
        <authorList>
            <consortium name="The Salmonella enterica serovar Paratyphi B Genome Sequencing Project"/>
            <person name="McClelland M."/>
            <person name="Sanderson E.K."/>
            <person name="Porwollik S."/>
            <person name="Spieth J."/>
            <person name="Clifton W.S."/>
            <person name="Fulton R."/>
            <person name="Cordes M."/>
            <person name="Wollam A."/>
            <person name="Shah N."/>
            <person name="Pepin K."/>
            <person name="Bhonagiri V."/>
            <person name="Nash W."/>
            <person name="Johnson M."/>
            <person name="Thiruvilangam P."/>
            <person name="Wilson R."/>
        </authorList>
    </citation>
    <scope>NUCLEOTIDE SEQUENCE [LARGE SCALE GENOMIC DNA]</scope>
    <source>
        <strain>ATCC BAA-1250 / SPB7</strain>
    </source>
</reference>
<organism>
    <name type="scientific">Salmonella paratyphi B (strain ATCC BAA-1250 / SPB7)</name>
    <dbReference type="NCBI Taxonomy" id="1016998"/>
    <lineage>
        <taxon>Bacteria</taxon>
        <taxon>Pseudomonadati</taxon>
        <taxon>Pseudomonadota</taxon>
        <taxon>Gammaproteobacteria</taxon>
        <taxon>Enterobacterales</taxon>
        <taxon>Enterobacteriaceae</taxon>
        <taxon>Salmonella</taxon>
    </lineage>
</organism>
<accession>A9MYK0</accession>
<feature type="chain" id="PRO_1000084423" description="L-carnitine/gamma-butyrobetaine antiporter">
    <location>
        <begin position="1"/>
        <end position="505"/>
    </location>
</feature>
<feature type="transmembrane region" description="Helical" evidence="1">
    <location>
        <begin position="10"/>
        <end position="30"/>
    </location>
</feature>
<feature type="transmembrane region" description="Helical" evidence="1">
    <location>
        <begin position="51"/>
        <end position="71"/>
    </location>
</feature>
<feature type="transmembrane region" description="Helical" evidence="1">
    <location>
        <begin position="92"/>
        <end position="112"/>
    </location>
</feature>
<feature type="transmembrane region" description="Helical" evidence="1">
    <location>
        <begin position="143"/>
        <end position="163"/>
    </location>
</feature>
<feature type="transmembrane region" description="Helical" evidence="1">
    <location>
        <begin position="195"/>
        <end position="215"/>
    </location>
</feature>
<feature type="transmembrane region" description="Helical" evidence="1">
    <location>
        <begin position="231"/>
        <end position="251"/>
    </location>
</feature>
<feature type="transmembrane region" description="Helical" evidence="1">
    <location>
        <begin position="263"/>
        <end position="283"/>
    </location>
</feature>
<feature type="transmembrane region" description="Helical" evidence="1">
    <location>
        <begin position="316"/>
        <end position="336"/>
    </location>
</feature>
<feature type="transmembrane region" description="Helical" evidence="1">
    <location>
        <begin position="347"/>
        <end position="367"/>
    </location>
</feature>
<feature type="transmembrane region" description="Helical" evidence="1">
    <location>
        <begin position="403"/>
        <end position="423"/>
    </location>
</feature>
<feature type="transmembrane region" description="Helical" evidence="1">
    <location>
        <begin position="446"/>
        <end position="466"/>
    </location>
</feature>
<feature type="transmembrane region" description="Helical" evidence="1">
    <location>
        <begin position="475"/>
        <end position="495"/>
    </location>
</feature>
<name>CAIT_SALPB</name>